<comment type="function">
    <text evidence="1">One of the primary rRNA binding proteins, it binds directly near the 3'-end of the 23S rRNA, where it nucleates assembly of the 50S subunit.</text>
</comment>
<comment type="subunit">
    <text evidence="1">Part of the 50S ribosomal subunit. Forms a cluster with proteins L14 and L19.</text>
</comment>
<comment type="similarity">
    <text evidence="1">Belongs to the universal ribosomal protein uL3 family.</text>
</comment>
<evidence type="ECO:0000255" key="1">
    <source>
        <dbReference type="HAMAP-Rule" id="MF_01325"/>
    </source>
</evidence>
<evidence type="ECO:0000256" key="2">
    <source>
        <dbReference type="SAM" id="MobiDB-lite"/>
    </source>
</evidence>
<evidence type="ECO:0000305" key="3"/>
<sequence>MPKGLLGKKVGMTQIFTDTGLAVPVTVIEAGPCIVVQKKTPEKDGYSAIQLGFGAKKERSFNKPMLGHFLAARVRPLRYLREVRVENPETYQVGQEIKADIFAPGEKVDVVGTTKGRGFAGGIKRHGFHRGPMAHGSKYHRRPGSLGAKGPARVFKGRRLPGHLGMERVTVQNLEVVKVDADRNLLAVKGAVPGPKGGLVLIKQAAKARG</sequence>
<keyword id="KW-1185">Reference proteome</keyword>
<keyword id="KW-0687">Ribonucleoprotein</keyword>
<keyword id="KW-0689">Ribosomal protein</keyword>
<keyword id="KW-0694">RNA-binding</keyword>
<keyword id="KW-0699">rRNA-binding</keyword>
<dbReference type="EMBL" id="AP009389">
    <property type="protein sequence ID" value="BAF58501.1"/>
    <property type="molecule type" value="Genomic_DNA"/>
</dbReference>
<dbReference type="SMR" id="A5D5J0"/>
<dbReference type="STRING" id="370438.PTH_0320"/>
<dbReference type="KEGG" id="pth:PTH_0320"/>
<dbReference type="eggNOG" id="COG0087">
    <property type="taxonomic scope" value="Bacteria"/>
</dbReference>
<dbReference type="HOGENOM" id="CLU_044142_4_1_9"/>
<dbReference type="Proteomes" id="UP000006556">
    <property type="component" value="Chromosome"/>
</dbReference>
<dbReference type="GO" id="GO:0022625">
    <property type="term" value="C:cytosolic large ribosomal subunit"/>
    <property type="evidence" value="ECO:0007669"/>
    <property type="project" value="TreeGrafter"/>
</dbReference>
<dbReference type="GO" id="GO:0019843">
    <property type="term" value="F:rRNA binding"/>
    <property type="evidence" value="ECO:0007669"/>
    <property type="project" value="UniProtKB-UniRule"/>
</dbReference>
<dbReference type="GO" id="GO:0003735">
    <property type="term" value="F:structural constituent of ribosome"/>
    <property type="evidence" value="ECO:0007669"/>
    <property type="project" value="InterPro"/>
</dbReference>
<dbReference type="GO" id="GO:0006412">
    <property type="term" value="P:translation"/>
    <property type="evidence" value="ECO:0007669"/>
    <property type="project" value="UniProtKB-UniRule"/>
</dbReference>
<dbReference type="FunFam" id="2.40.30.10:FF:000004">
    <property type="entry name" value="50S ribosomal protein L3"/>
    <property type="match status" value="1"/>
</dbReference>
<dbReference type="FunFam" id="3.30.160.810:FF:000001">
    <property type="entry name" value="50S ribosomal protein L3"/>
    <property type="match status" value="1"/>
</dbReference>
<dbReference type="Gene3D" id="3.30.160.810">
    <property type="match status" value="1"/>
</dbReference>
<dbReference type="Gene3D" id="2.40.30.10">
    <property type="entry name" value="Translation factors"/>
    <property type="match status" value="1"/>
</dbReference>
<dbReference type="HAMAP" id="MF_01325_B">
    <property type="entry name" value="Ribosomal_uL3_B"/>
    <property type="match status" value="1"/>
</dbReference>
<dbReference type="InterPro" id="IPR000597">
    <property type="entry name" value="Ribosomal_uL3"/>
</dbReference>
<dbReference type="InterPro" id="IPR019927">
    <property type="entry name" value="Ribosomal_uL3_bac/org-type"/>
</dbReference>
<dbReference type="InterPro" id="IPR019926">
    <property type="entry name" value="Ribosomal_uL3_CS"/>
</dbReference>
<dbReference type="InterPro" id="IPR009000">
    <property type="entry name" value="Transl_B-barrel_sf"/>
</dbReference>
<dbReference type="NCBIfam" id="TIGR03625">
    <property type="entry name" value="L3_bact"/>
    <property type="match status" value="1"/>
</dbReference>
<dbReference type="PANTHER" id="PTHR11229">
    <property type="entry name" value="50S RIBOSOMAL PROTEIN L3"/>
    <property type="match status" value="1"/>
</dbReference>
<dbReference type="PANTHER" id="PTHR11229:SF16">
    <property type="entry name" value="LARGE RIBOSOMAL SUBUNIT PROTEIN UL3C"/>
    <property type="match status" value="1"/>
</dbReference>
<dbReference type="Pfam" id="PF00297">
    <property type="entry name" value="Ribosomal_L3"/>
    <property type="match status" value="1"/>
</dbReference>
<dbReference type="SUPFAM" id="SSF50447">
    <property type="entry name" value="Translation proteins"/>
    <property type="match status" value="1"/>
</dbReference>
<dbReference type="PROSITE" id="PS00474">
    <property type="entry name" value="RIBOSOMAL_L3"/>
    <property type="match status" value="1"/>
</dbReference>
<feature type="chain" id="PRO_1000086450" description="Large ribosomal subunit protein uL3">
    <location>
        <begin position="1"/>
        <end position="210"/>
    </location>
</feature>
<feature type="region of interest" description="Disordered" evidence="2">
    <location>
        <begin position="121"/>
        <end position="150"/>
    </location>
</feature>
<name>RL3_PELTS</name>
<accession>A5D5J0</accession>
<organism>
    <name type="scientific">Pelotomaculum thermopropionicum (strain DSM 13744 / JCM 10971 / SI)</name>
    <dbReference type="NCBI Taxonomy" id="370438"/>
    <lineage>
        <taxon>Bacteria</taxon>
        <taxon>Bacillati</taxon>
        <taxon>Bacillota</taxon>
        <taxon>Clostridia</taxon>
        <taxon>Eubacteriales</taxon>
        <taxon>Desulfotomaculaceae</taxon>
        <taxon>Pelotomaculum</taxon>
    </lineage>
</organism>
<proteinExistence type="inferred from homology"/>
<gene>
    <name evidence="1" type="primary">rplC</name>
    <name type="ordered locus">PTH_0320</name>
</gene>
<protein>
    <recommendedName>
        <fullName evidence="1">Large ribosomal subunit protein uL3</fullName>
    </recommendedName>
    <alternativeName>
        <fullName evidence="3">50S ribosomal protein L3</fullName>
    </alternativeName>
</protein>
<reference key="1">
    <citation type="journal article" date="2008" name="Genome Res.">
        <title>The genome of Pelotomaculum thermopropionicum reveals niche-associated evolution in anaerobic microbiota.</title>
        <authorList>
            <person name="Kosaka T."/>
            <person name="Kato S."/>
            <person name="Shimoyama T."/>
            <person name="Ishii S."/>
            <person name="Abe T."/>
            <person name="Watanabe K."/>
        </authorList>
    </citation>
    <scope>NUCLEOTIDE SEQUENCE [LARGE SCALE GENOMIC DNA]</scope>
    <source>
        <strain>DSM 13744 / JCM 10971 / SI</strain>
    </source>
</reference>